<name>RHG27_MOUSE</name>
<gene>
    <name type="primary">Arhgap27</name>
    <name type="synonym">Camgap1</name>
</gene>
<proteinExistence type="evidence at protein level"/>
<comment type="function">
    <text evidence="1">Rho GTPase-activating protein which may be involved in clathrin-mediated endocytosis. GTPase activators for the Rho-type GTPases act by converting them to an inactive GDP-bound state. Has activity toward CDC42 and RAC1 (By similarity).</text>
</comment>
<comment type="subunit">
    <text evidence="1">Interacts with SH3KBP1/CIN85.</text>
</comment>
<comment type="subcellular location">
    <subcellularLocation>
        <location evidence="1">Cytoplasm</location>
    </subcellularLocation>
    <subcellularLocation>
        <location evidence="1">Membrane</location>
        <topology evidence="1">Peripheral membrane protein</topology>
    </subcellularLocation>
</comment>
<comment type="alternative products">
    <event type="alternative splicing"/>
    <isoform>
        <id>A2AB59-1</id>
        <name>1</name>
        <sequence type="displayed"/>
    </isoform>
    <isoform>
        <id>A2AB59-2</id>
        <name>2</name>
        <sequence type="described" ref="VSP_031057"/>
    </isoform>
</comment>
<comment type="tissue specificity">
    <text evidence="9">Widely expressed. Highly expressed in kidney, lung, small intestine and thymus.</text>
</comment>
<comment type="sequence caution" evidence="11">
    <conflict type="erroneous initiation">
        <sequence resource="EMBL-CDS" id="AAH96671"/>
    </conflict>
</comment>
<feature type="chain" id="PRO_0000317579" description="Rho GTPase-activating protein 27">
    <location>
        <begin position="1"/>
        <end position="869"/>
    </location>
</feature>
<feature type="domain" description="SH3" evidence="6">
    <location>
        <begin position="6"/>
        <end position="69"/>
    </location>
</feature>
<feature type="domain" description="WW 1" evidence="7">
    <location>
        <begin position="246"/>
        <end position="280"/>
    </location>
</feature>
<feature type="domain" description="WW 2" evidence="7">
    <location>
        <begin position="299"/>
        <end position="333"/>
    </location>
</feature>
<feature type="domain" description="WW 3" evidence="7">
    <location>
        <begin position="414"/>
        <end position="447"/>
    </location>
</feature>
<feature type="domain" description="PH" evidence="4">
    <location>
        <begin position="477"/>
        <end position="593"/>
    </location>
</feature>
<feature type="domain" description="Rho-GAP" evidence="5">
    <location>
        <begin position="677"/>
        <end position="866"/>
    </location>
</feature>
<feature type="region of interest" description="Disordered" evidence="8">
    <location>
        <begin position="104"/>
        <end position="134"/>
    </location>
</feature>
<feature type="region of interest" description="Disordered" evidence="8">
    <location>
        <begin position="208"/>
        <end position="300"/>
    </location>
</feature>
<feature type="region of interest" description="Disordered" evidence="8">
    <location>
        <begin position="331"/>
        <end position="401"/>
    </location>
</feature>
<feature type="region of interest" description="Disordered" evidence="8">
    <location>
        <begin position="449"/>
        <end position="477"/>
    </location>
</feature>
<feature type="region of interest" description="Disordered" evidence="8">
    <location>
        <begin position="623"/>
        <end position="642"/>
    </location>
</feature>
<feature type="compositionally biased region" description="Basic and acidic residues" evidence="8">
    <location>
        <begin position="209"/>
        <end position="220"/>
    </location>
</feature>
<feature type="compositionally biased region" description="Low complexity" evidence="8">
    <location>
        <begin position="235"/>
        <end position="250"/>
    </location>
</feature>
<feature type="compositionally biased region" description="Polar residues" evidence="8">
    <location>
        <begin position="283"/>
        <end position="294"/>
    </location>
</feature>
<feature type="compositionally biased region" description="Polar residues" evidence="8">
    <location>
        <begin position="345"/>
        <end position="356"/>
    </location>
</feature>
<feature type="site" description="Arginine finger; crucial for GTP hydrolysis by stabilizing the transition state" evidence="5">
    <location>
        <position position="713"/>
    </location>
</feature>
<feature type="modified residue" description="Phosphoserine" evidence="2">
    <location>
        <position position="155"/>
    </location>
</feature>
<feature type="modified residue" description="Phosphoserine" evidence="12 14">
    <location>
        <position position="215"/>
    </location>
</feature>
<feature type="modified residue" description="Phosphoserine" evidence="3">
    <location>
        <position position="249"/>
    </location>
</feature>
<feature type="modified residue" description="Phosphoserine" evidence="14">
    <location>
        <position position="350"/>
    </location>
</feature>
<feature type="modified residue" description="Phosphoserine" evidence="14">
    <location>
        <position position="459"/>
    </location>
</feature>
<feature type="modified residue" description="Phosphoserine" evidence="14">
    <location>
        <position position="462"/>
    </location>
</feature>
<feature type="modified residue" description="Phosphothreonine" evidence="14">
    <location>
        <position position="464"/>
    </location>
</feature>
<feature type="modified residue" description="Phosphoserine" evidence="14">
    <location>
        <position position="469"/>
    </location>
</feature>
<feature type="modified residue" description="Phosphoserine" evidence="14">
    <location>
        <position position="632"/>
    </location>
</feature>
<feature type="modified residue" description="Phosphoserine" evidence="14">
    <location>
        <position position="636"/>
    </location>
</feature>
<feature type="splice variant" id="VSP_031057" description="In isoform 2." evidence="10">
    <original>MAADVEGDVYVLVEHPFEYTGKDGRRIAIQPNERYRLLRRSTEHWWHVRREPGGRPFYLPAQYVRELPALGDPAPAPQPSVPQQRPAVPEPLAYDYRFVSTPVGADGSSAEPRGRASSLCGPARQRTGGQRNSLAPGGPACLYVRPAAPVRPAQSLDDLARGGTAPPAGLLGSAGHFKASSVAGSWVCPRPLAPSDSENVYEAIPDLRCPPRAESPK</original>
    <variation>MVDMISKLVRRQSRALRA</variation>
    <location>
        <begin position="1"/>
        <end position="217"/>
    </location>
</feature>
<feature type="modified residue" description="Phosphotyrosine" evidence="13 14">
    <location sequence="A2AB59-2">
        <position position="28"/>
    </location>
</feature>
<dbReference type="EMBL" id="AK046763">
    <property type="protein sequence ID" value="BAE20660.1"/>
    <property type="molecule type" value="mRNA"/>
</dbReference>
<dbReference type="EMBL" id="AL662804">
    <property type="status" value="NOT_ANNOTATED_CDS"/>
    <property type="molecule type" value="Genomic_DNA"/>
</dbReference>
<dbReference type="EMBL" id="AL772325">
    <property type="status" value="NOT_ANNOTATED_CDS"/>
    <property type="molecule type" value="Genomic_DNA"/>
</dbReference>
<dbReference type="EMBL" id="BC096671">
    <property type="protein sequence ID" value="AAH96671.1"/>
    <property type="status" value="ALT_INIT"/>
    <property type="molecule type" value="mRNA"/>
</dbReference>
<dbReference type="CCDS" id="CCDS25517.1">
    <molecule id="A2AB59-2"/>
</dbReference>
<dbReference type="CCDS" id="CCDS56815.1">
    <molecule id="A2AB59-1"/>
</dbReference>
<dbReference type="RefSeq" id="NP_001192165.1">
    <molecule id="A2AB59-1"/>
    <property type="nucleotide sequence ID" value="NM_001205236.1"/>
</dbReference>
<dbReference type="RefSeq" id="NP_598476.2">
    <molecule id="A2AB59-2"/>
    <property type="nucleotide sequence ID" value="NM_133715.5"/>
</dbReference>
<dbReference type="RefSeq" id="XP_036012749.1">
    <molecule id="A2AB59-1"/>
    <property type="nucleotide sequence ID" value="XM_036156856.1"/>
</dbReference>
<dbReference type="SMR" id="A2AB59"/>
<dbReference type="FunCoup" id="A2AB59">
    <property type="interactions" value="472"/>
</dbReference>
<dbReference type="STRING" id="10090.ENSMUSP00000102639"/>
<dbReference type="iPTMnet" id="A2AB59"/>
<dbReference type="PhosphoSitePlus" id="A2AB59"/>
<dbReference type="jPOST" id="A2AB59"/>
<dbReference type="PaxDb" id="10090-ENSMUSP00000039427"/>
<dbReference type="PeptideAtlas" id="A2AB59"/>
<dbReference type="ProteomicsDB" id="254965">
    <molecule id="A2AB59-1"/>
</dbReference>
<dbReference type="ProteomicsDB" id="254966">
    <molecule id="A2AB59-2"/>
</dbReference>
<dbReference type="Antibodypedia" id="49843">
    <property type="antibodies" value="134 antibodies from 23 providers"/>
</dbReference>
<dbReference type="Ensembl" id="ENSMUST00000041385.14">
    <molecule id="A2AB59-2"/>
    <property type="protein sequence ID" value="ENSMUSP00000039427.8"/>
    <property type="gene ID" value="ENSMUSG00000034255.19"/>
</dbReference>
<dbReference type="Ensembl" id="ENSMUST00000107024.9">
    <molecule id="A2AB59-1"/>
    <property type="protein sequence ID" value="ENSMUSP00000102639.2"/>
    <property type="gene ID" value="ENSMUSG00000034255.19"/>
</dbReference>
<dbReference type="GeneID" id="544817"/>
<dbReference type="KEGG" id="mmu:544817"/>
<dbReference type="UCSC" id="uc007luc.2">
    <molecule id="A2AB59-1"/>
    <property type="organism name" value="mouse"/>
</dbReference>
<dbReference type="UCSC" id="uc007lud.2">
    <molecule id="A2AB59-2"/>
    <property type="organism name" value="mouse"/>
</dbReference>
<dbReference type="AGR" id="MGI:1916903"/>
<dbReference type="CTD" id="201176"/>
<dbReference type="MGI" id="MGI:1916903">
    <property type="gene designation" value="Arhgap27"/>
</dbReference>
<dbReference type="VEuPathDB" id="HostDB:ENSMUSG00000034255"/>
<dbReference type="eggNOG" id="KOG1450">
    <property type="taxonomic scope" value="Eukaryota"/>
</dbReference>
<dbReference type="eggNOG" id="KOG4269">
    <property type="taxonomic scope" value="Eukaryota"/>
</dbReference>
<dbReference type="GeneTree" id="ENSGT00950000182860"/>
<dbReference type="HOGENOM" id="CLU_015883_6_1_1"/>
<dbReference type="InParanoid" id="A2AB59"/>
<dbReference type="OMA" id="NNWEIHT"/>
<dbReference type="OrthoDB" id="79452at2759"/>
<dbReference type="PhylomeDB" id="A2AB59"/>
<dbReference type="TreeFam" id="TF329345"/>
<dbReference type="Reactome" id="R-MMU-9013148">
    <property type="pathway name" value="CDC42 GTPase cycle"/>
</dbReference>
<dbReference type="Reactome" id="R-MMU-9013149">
    <property type="pathway name" value="RAC1 GTPase cycle"/>
</dbReference>
<dbReference type="BioGRID-ORCS" id="544817">
    <property type="hits" value="5 hits in 76 CRISPR screens"/>
</dbReference>
<dbReference type="ChiTaRS" id="Arhgap27">
    <property type="organism name" value="mouse"/>
</dbReference>
<dbReference type="PRO" id="PR:A2AB59"/>
<dbReference type="Proteomes" id="UP000000589">
    <property type="component" value="Chromosome 11"/>
</dbReference>
<dbReference type="RNAct" id="A2AB59">
    <property type="molecule type" value="protein"/>
</dbReference>
<dbReference type="Bgee" id="ENSMUSG00000034255">
    <property type="expression patterns" value="Expressed in granulocyte and 186 other cell types or tissues"/>
</dbReference>
<dbReference type="ExpressionAtlas" id="A2AB59">
    <property type="expression patterns" value="baseline and differential"/>
</dbReference>
<dbReference type="GO" id="GO:0005768">
    <property type="term" value="C:endosome"/>
    <property type="evidence" value="ECO:0000266"/>
    <property type="project" value="MGI"/>
</dbReference>
<dbReference type="GO" id="GO:0016020">
    <property type="term" value="C:membrane"/>
    <property type="evidence" value="ECO:0007669"/>
    <property type="project" value="UniProtKB-SubCell"/>
</dbReference>
<dbReference type="GO" id="GO:0051015">
    <property type="term" value="F:actin filament binding"/>
    <property type="evidence" value="ECO:0000314"/>
    <property type="project" value="MGI"/>
</dbReference>
<dbReference type="GO" id="GO:0005096">
    <property type="term" value="F:GTPase activator activity"/>
    <property type="evidence" value="ECO:0000250"/>
    <property type="project" value="UniProtKB"/>
</dbReference>
<dbReference type="GO" id="GO:0017124">
    <property type="term" value="F:SH3 domain binding"/>
    <property type="evidence" value="ECO:0000250"/>
    <property type="project" value="UniProtKB"/>
</dbReference>
<dbReference type="GO" id="GO:0051291">
    <property type="term" value="P:protein heterooligomerization"/>
    <property type="evidence" value="ECO:0000314"/>
    <property type="project" value="MGI"/>
</dbReference>
<dbReference type="GO" id="GO:0006898">
    <property type="term" value="P:receptor-mediated endocytosis"/>
    <property type="evidence" value="ECO:0000250"/>
    <property type="project" value="UniProtKB"/>
</dbReference>
<dbReference type="GO" id="GO:0007266">
    <property type="term" value="P:Rho protein signal transduction"/>
    <property type="evidence" value="ECO:0000250"/>
    <property type="project" value="UniProtKB"/>
</dbReference>
<dbReference type="CDD" id="cd13233">
    <property type="entry name" value="PH_ARHGAP9-like"/>
    <property type="match status" value="1"/>
</dbReference>
<dbReference type="CDD" id="cd04403">
    <property type="entry name" value="RhoGAP_ARHGAP27_15_12_9"/>
    <property type="match status" value="1"/>
</dbReference>
<dbReference type="CDD" id="cd12069">
    <property type="entry name" value="SH3_ARHGAP27"/>
    <property type="match status" value="1"/>
</dbReference>
<dbReference type="CDD" id="cd00201">
    <property type="entry name" value="WW"/>
    <property type="match status" value="2"/>
</dbReference>
<dbReference type="FunFam" id="1.10.555.10:FF:000003">
    <property type="entry name" value="Putative rho GTPase-activating protein 12"/>
    <property type="match status" value="1"/>
</dbReference>
<dbReference type="FunFam" id="2.20.70.10:FF:000061">
    <property type="entry name" value="Rho GTPase activating protein 27"/>
    <property type="match status" value="1"/>
</dbReference>
<dbReference type="FunFam" id="2.30.29.30:FF:000206">
    <property type="entry name" value="Rho GTPase activating protein 27"/>
    <property type="match status" value="1"/>
</dbReference>
<dbReference type="FunFam" id="2.30.30.40:FF:000231">
    <property type="entry name" value="Rho GTPase activating protein 27"/>
    <property type="match status" value="1"/>
</dbReference>
<dbReference type="Gene3D" id="2.20.70.10">
    <property type="match status" value="2"/>
</dbReference>
<dbReference type="Gene3D" id="2.30.29.30">
    <property type="entry name" value="Pleckstrin-homology domain (PH domain)/Phosphotyrosine-binding domain (PTB)"/>
    <property type="match status" value="1"/>
</dbReference>
<dbReference type="Gene3D" id="1.10.555.10">
    <property type="entry name" value="Rho GTPase activation protein"/>
    <property type="match status" value="1"/>
</dbReference>
<dbReference type="Gene3D" id="2.30.30.40">
    <property type="entry name" value="SH3 Domains"/>
    <property type="match status" value="1"/>
</dbReference>
<dbReference type="InterPro" id="IPR011993">
    <property type="entry name" value="PH-like_dom_sf"/>
</dbReference>
<dbReference type="InterPro" id="IPR001849">
    <property type="entry name" value="PH_domain"/>
</dbReference>
<dbReference type="InterPro" id="IPR011047">
    <property type="entry name" value="Quinoprotein_ADH-like_sf"/>
</dbReference>
<dbReference type="InterPro" id="IPR050729">
    <property type="entry name" value="Rho-GAP"/>
</dbReference>
<dbReference type="InterPro" id="IPR008936">
    <property type="entry name" value="Rho_GTPase_activation_prot"/>
</dbReference>
<dbReference type="InterPro" id="IPR000198">
    <property type="entry name" value="RhoGAP_dom"/>
</dbReference>
<dbReference type="InterPro" id="IPR036028">
    <property type="entry name" value="SH3-like_dom_sf"/>
</dbReference>
<dbReference type="InterPro" id="IPR001452">
    <property type="entry name" value="SH3_domain"/>
</dbReference>
<dbReference type="InterPro" id="IPR001202">
    <property type="entry name" value="WW_dom"/>
</dbReference>
<dbReference type="InterPro" id="IPR036020">
    <property type="entry name" value="WW_dom_sf"/>
</dbReference>
<dbReference type="PANTHER" id="PTHR23176:SF104">
    <property type="entry name" value="RHO GTPASE-ACTIVATING PROTEIN 27"/>
    <property type="match status" value="1"/>
</dbReference>
<dbReference type="PANTHER" id="PTHR23176">
    <property type="entry name" value="RHO/RAC/CDC GTPASE-ACTIVATING PROTEIN"/>
    <property type="match status" value="1"/>
</dbReference>
<dbReference type="Pfam" id="PF00169">
    <property type="entry name" value="PH"/>
    <property type="match status" value="1"/>
</dbReference>
<dbReference type="Pfam" id="PF00620">
    <property type="entry name" value="RhoGAP"/>
    <property type="match status" value="1"/>
</dbReference>
<dbReference type="Pfam" id="PF00397">
    <property type="entry name" value="WW"/>
    <property type="match status" value="2"/>
</dbReference>
<dbReference type="SMART" id="SM00233">
    <property type="entry name" value="PH"/>
    <property type="match status" value="1"/>
</dbReference>
<dbReference type="SMART" id="SM00324">
    <property type="entry name" value="RhoGAP"/>
    <property type="match status" value="1"/>
</dbReference>
<dbReference type="SMART" id="SM00456">
    <property type="entry name" value="WW"/>
    <property type="match status" value="3"/>
</dbReference>
<dbReference type="SUPFAM" id="SSF48350">
    <property type="entry name" value="GTPase activation domain, GAP"/>
    <property type="match status" value="1"/>
</dbReference>
<dbReference type="SUPFAM" id="SSF50729">
    <property type="entry name" value="PH domain-like"/>
    <property type="match status" value="1"/>
</dbReference>
<dbReference type="SUPFAM" id="SSF50998">
    <property type="entry name" value="Quinoprotein alcohol dehydrogenase-like"/>
    <property type="match status" value="1"/>
</dbReference>
<dbReference type="SUPFAM" id="SSF50044">
    <property type="entry name" value="SH3-domain"/>
    <property type="match status" value="1"/>
</dbReference>
<dbReference type="SUPFAM" id="SSF51045">
    <property type="entry name" value="WW domain"/>
    <property type="match status" value="1"/>
</dbReference>
<dbReference type="PROSITE" id="PS50003">
    <property type="entry name" value="PH_DOMAIN"/>
    <property type="match status" value="1"/>
</dbReference>
<dbReference type="PROSITE" id="PS50238">
    <property type="entry name" value="RHOGAP"/>
    <property type="match status" value="1"/>
</dbReference>
<dbReference type="PROSITE" id="PS50002">
    <property type="entry name" value="SH3"/>
    <property type="match status" value="1"/>
</dbReference>
<dbReference type="PROSITE" id="PS50020">
    <property type="entry name" value="WW_DOMAIN_2"/>
    <property type="match status" value="3"/>
</dbReference>
<evidence type="ECO:0000250" key="1"/>
<evidence type="ECO:0000250" key="2">
    <source>
        <dbReference type="UniProtKB" id="Q6TLK4"/>
    </source>
</evidence>
<evidence type="ECO:0000250" key="3">
    <source>
        <dbReference type="UniProtKB" id="Q6ZUM4"/>
    </source>
</evidence>
<evidence type="ECO:0000255" key="4">
    <source>
        <dbReference type="PROSITE-ProRule" id="PRU00145"/>
    </source>
</evidence>
<evidence type="ECO:0000255" key="5">
    <source>
        <dbReference type="PROSITE-ProRule" id="PRU00172"/>
    </source>
</evidence>
<evidence type="ECO:0000255" key="6">
    <source>
        <dbReference type="PROSITE-ProRule" id="PRU00192"/>
    </source>
</evidence>
<evidence type="ECO:0000255" key="7">
    <source>
        <dbReference type="PROSITE-ProRule" id="PRU00224"/>
    </source>
</evidence>
<evidence type="ECO:0000256" key="8">
    <source>
        <dbReference type="SAM" id="MobiDB-lite"/>
    </source>
</evidence>
<evidence type="ECO:0000269" key="9">
    <source>
    </source>
</evidence>
<evidence type="ECO:0000303" key="10">
    <source>
    </source>
</evidence>
<evidence type="ECO:0000305" key="11"/>
<evidence type="ECO:0007744" key="12">
    <source>
    </source>
</evidence>
<evidence type="ECO:0007744" key="13">
    <source>
    </source>
</evidence>
<evidence type="ECO:0007744" key="14">
    <source>
    </source>
</evidence>
<reference key="1">
    <citation type="journal article" date="2005" name="Science">
        <title>The transcriptional landscape of the mammalian genome.</title>
        <authorList>
            <person name="Carninci P."/>
            <person name="Kasukawa T."/>
            <person name="Katayama S."/>
            <person name="Gough J."/>
            <person name="Frith M.C."/>
            <person name="Maeda N."/>
            <person name="Oyama R."/>
            <person name="Ravasi T."/>
            <person name="Lenhard B."/>
            <person name="Wells C."/>
            <person name="Kodzius R."/>
            <person name="Shimokawa K."/>
            <person name="Bajic V.B."/>
            <person name="Brenner S.E."/>
            <person name="Batalov S."/>
            <person name="Forrest A.R."/>
            <person name="Zavolan M."/>
            <person name="Davis M.J."/>
            <person name="Wilming L.G."/>
            <person name="Aidinis V."/>
            <person name="Allen J.E."/>
            <person name="Ambesi-Impiombato A."/>
            <person name="Apweiler R."/>
            <person name="Aturaliya R.N."/>
            <person name="Bailey T.L."/>
            <person name="Bansal M."/>
            <person name="Baxter L."/>
            <person name="Beisel K.W."/>
            <person name="Bersano T."/>
            <person name="Bono H."/>
            <person name="Chalk A.M."/>
            <person name="Chiu K.P."/>
            <person name="Choudhary V."/>
            <person name="Christoffels A."/>
            <person name="Clutterbuck D.R."/>
            <person name="Crowe M.L."/>
            <person name="Dalla E."/>
            <person name="Dalrymple B.P."/>
            <person name="de Bono B."/>
            <person name="Della Gatta G."/>
            <person name="di Bernardo D."/>
            <person name="Down T."/>
            <person name="Engstrom P."/>
            <person name="Fagiolini M."/>
            <person name="Faulkner G."/>
            <person name="Fletcher C.F."/>
            <person name="Fukushima T."/>
            <person name="Furuno M."/>
            <person name="Futaki S."/>
            <person name="Gariboldi M."/>
            <person name="Georgii-Hemming P."/>
            <person name="Gingeras T.R."/>
            <person name="Gojobori T."/>
            <person name="Green R.E."/>
            <person name="Gustincich S."/>
            <person name="Harbers M."/>
            <person name="Hayashi Y."/>
            <person name="Hensch T.K."/>
            <person name="Hirokawa N."/>
            <person name="Hill D."/>
            <person name="Huminiecki L."/>
            <person name="Iacono M."/>
            <person name="Ikeo K."/>
            <person name="Iwama A."/>
            <person name="Ishikawa T."/>
            <person name="Jakt M."/>
            <person name="Kanapin A."/>
            <person name="Katoh M."/>
            <person name="Kawasawa Y."/>
            <person name="Kelso J."/>
            <person name="Kitamura H."/>
            <person name="Kitano H."/>
            <person name="Kollias G."/>
            <person name="Krishnan S.P."/>
            <person name="Kruger A."/>
            <person name="Kummerfeld S.K."/>
            <person name="Kurochkin I.V."/>
            <person name="Lareau L.F."/>
            <person name="Lazarevic D."/>
            <person name="Lipovich L."/>
            <person name="Liu J."/>
            <person name="Liuni S."/>
            <person name="McWilliam S."/>
            <person name="Madan Babu M."/>
            <person name="Madera M."/>
            <person name="Marchionni L."/>
            <person name="Matsuda H."/>
            <person name="Matsuzawa S."/>
            <person name="Miki H."/>
            <person name="Mignone F."/>
            <person name="Miyake S."/>
            <person name="Morris K."/>
            <person name="Mottagui-Tabar S."/>
            <person name="Mulder N."/>
            <person name="Nakano N."/>
            <person name="Nakauchi H."/>
            <person name="Ng P."/>
            <person name="Nilsson R."/>
            <person name="Nishiguchi S."/>
            <person name="Nishikawa S."/>
            <person name="Nori F."/>
            <person name="Ohara O."/>
            <person name="Okazaki Y."/>
            <person name="Orlando V."/>
            <person name="Pang K.C."/>
            <person name="Pavan W.J."/>
            <person name="Pavesi G."/>
            <person name="Pesole G."/>
            <person name="Petrovsky N."/>
            <person name="Piazza S."/>
            <person name="Reed J."/>
            <person name="Reid J.F."/>
            <person name="Ring B.Z."/>
            <person name="Ringwald M."/>
            <person name="Rost B."/>
            <person name="Ruan Y."/>
            <person name="Salzberg S.L."/>
            <person name="Sandelin A."/>
            <person name="Schneider C."/>
            <person name="Schoenbach C."/>
            <person name="Sekiguchi K."/>
            <person name="Semple C.A."/>
            <person name="Seno S."/>
            <person name="Sessa L."/>
            <person name="Sheng Y."/>
            <person name="Shibata Y."/>
            <person name="Shimada H."/>
            <person name="Shimada K."/>
            <person name="Silva D."/>
            <person name="Sinclair B."/>
            <person name="Sperling S."/>
            <person name="Stupka E."/>
            <person name="Sugiura K."/>
            <person name="Sultana R."/>
            <person name="Takenaka Y."/>
            <person name="Taki K."/>
            <person name="Tammoja K."/>
            <person name="Tan S.L."/>
            <person name="Tang S."/>
            <person name="Taylor M.S."/>
            <person name="Tegner J."/>
            <person name="Teichmann S.A."/>
            <person name="Ueda H.R."/>
            <person name="van Nimwegen E."/>
            <person name="Verardo R."/>
            <person name="Wei C.L."/>
            <person name="Yagi K."/>
            <person name="Yamanishi H."/>
            <person name="Zabarovsky E."/>
            <person name="Zhu S."/>
            <person name="Zimmer A."/>
            <person name="Hide W."/>
            <person name="Bult C."/>
            <person name="Grimmond S.M."/>
            <person name="Teasdale R.D."/>
            <person name="Liu E.T."/>
            <person name="Brusic V."/>
            <person name="Quackenbush J."/>
            <person name="Wahlestedt C."/>
            <person name="Mattick J.S."/>
            <person name="Hume D.A."/>
            <person name="Kai C."/>
            <person name="Sasaki D."/>
            <person name="Tomaru Y."/>
            <person name="Fukuda S."/>
            <person name="Kanamori-Katayama M."/>
            <person name="Suzuki M."/>
            <person name="Aoki J."/>
            <person name="Arakawa T."/>
            <person name="Iida J."/>
            <person name="Imamura K."/>
            <person name="Itoh M."/>
            <person name="Kato T."/>
            <person name="Kawaji H."/>
            <person name="Kawagashira N."/>
            <person name="Kawashima T."/>
            <person name="Kojima M."/>
            <person name="Kondo S."/>
            <person name="Konno H."/>
            <person name="Nakano K."/>
            <person name="Ninomiya N."/>
            <person name="Nishio T."/>
            <person name="Okada M."/>
            <person name="Plessy C."/>
            <person name="Shibata K."/>
            <person name="Shiraki T."/>
            <person name="Suzuki S."/>
            <person name="Tagami M."/>
            <person name="Waki K."/>
            <person name="Watahiki A."/>
            <person name="Okamura-Oho Y."/>
            <person name="Suzuki H."/>
            <person name="Kawai J."/>
            <person name="Hayashizaki Y."/>
        </authorList>
    </citation>
    <scope>NUCLEOTIDE SEQUENCE [LARGE SCALE MRNA] (ISOFORM 2)</scope>
    <source>
        <strain>C57BL/6J</strain>
        <tissue>Thymus</tissue>
    </source>
</reference>
<reference key="2">
    <citation type="journal article" date="2009" name="PLoS Biol.">
        <title>Lineage-specific biology revealed by a finished genome assembly of the mouse.</title>
        <authorList>
            <person name="Church D.M."/>
            <person name="Goodstadt L."/>
            <person name="Hillier L.W."/>
            <person name="Zody M.C."/>
            <person name="Goldstein S."/>
            <person name="She X."/>
            <person name="Bult C.J."/>
            <person name="Agarwala R."/>
            <person name="Cherry J.L."/>
            <person name="DiCuccio M."/>
            <person name="Hlavina W."/>
            <person name="Kapustin Y."/>
            <person name="Meric P."/>
            <person name="Maglott D."/>
            <person name="Birtle Z."/>
            <person name="Marques A.C."/>
            <person name="Graves T."/>
            <person name="Zhou S."/>
            <person name="Teague B."/>
            <person name="Potamousis K."/>
            <person name="Churas C."/>
            <person name="Place M."/>
            <person name="Herschleb J."/>
            <person name="Runnheim R."/>
            <person name="Forrest D."/>
            <person name="Amos-Landgraf J."/>
            <person name="Schwartz D.C."/>
            <person name="Cheng Z."/>
            <person name="Lindblad-Toh K."/>
            <person name="Eichler E.E."/>
            <person name="Ponting C.P."/>
        </authorList>
    </citation>
    <scope>NUCLEOTIDE SEQUENCE [LARGE SCALE GENOMIC DNA]</scope>
    <source>
        <strain>C57BL/6J</strain>
    </source>
</reference>
<reference key="3">
    <citation type="journal article" date="2004" name="Genome Res.">
        <title>The status, quality, and expansion of the NIH full-length cDNA project: the Mammalian Gene Collection (MGC).</title>
        <authorList>
            <consortium name="The MGC Project Team"/>
        </authorList>
    </citation>
    <scope>NUCLEOTIDE SEQUENCE [LARGE SCALE MRNA] OF 749-869</scope>
    <source>
        <strain>Czech II</strain>
        <tissue>Lung</tissue>
    </source>
</reference>
<reference key="4">
    <citation type="journal article" date="2004" name="FEBS Lett.">
        <title>Identification and characterization of a novel Rho GTPase activating protein implicated in receptor-mediated endocytosis.</title>
        <authorList>
            <person name="Sakakibara T."/>
            <person name="Nemoto Y."/>
            <person name="Nukiwa T."/>
            <person name="Takeshima H."/>
        </authorList>
    </citation>
    <scope>TISSUE SPECIFICITY</scope>
</reference>
<reference key="5">
    <citation type="journal article" date="2007" name="Proc. Natl. Acad. Sci. U.S.A.">
        <title>Large-scale phosphorylation analysis of mouse liver.</title>
        <authorList>
            <person name="Villen J."/>
            <person name="Beausoleil S.A."/>
            <person name="Gerber S.A."/>
            <person name="Gygi S.P."/>
        </authorList>
    </citation>
    <scope>PHOSPHORYLATION [LARGE SCALE ANALYSIS] AT SER-215</scope>
    <scope>IDENTIFICATION BY MASS SPECTROMETRY [LARGE SCALE ANALYSIS]</scope>
    <source>
        <tissue>Liver</tissue>
    </source>
</reference>
<reference key="6">
    <citation type="journal article" date="2008" name="J. Proteome Res.">
        <title>Large-scale identification and evolution indexing of tyrosine phosphorylation sites from murine brain.</title>
        <authorList>
            <person name="Ballif B.A."/>
            <person name="Carey G.R."/>
            <person name="Sunyaev S.R."/>
            <person name="Gygi S.P."/>
        </authorList>
    </citation>
    <scope>PHOSPHORYLATION [LARGE SCALE ANALYSIS] AT TYR-28 (ISOFORM 2)</scope>
    <scope>IDENTIFICATION BY MASS SPECTROMETRY [LARGE SCALE ANALYSIS]</scope>
    <source>
        <tissue>Brain</tissue>
    </source>
</reference>
<reference key="7">
    <citation type="journal article" date="2010" name="Cell">
        <title>A tissue-specific atlas of mouse protein phosphorylation and expression.</title>
        <authorList>
            <person name="Huttlin E.L."/>
            <person name="Jedrychowski M.P."/>
            <person name="Elias J.E."/>
            <person name="Goswami T."/>
            <person name="Rad R."/>
            <person name="Beausoleil S.A."/>
            <person name="Villen J."/>
            <person name="Haas W."/>
            <person name="Sowa M.E."/>
            <person name="Gygi S.P."/>
        </authorList>
    </citation>
    <scope>PHOSPHORYLATION [LARGE SCALE ANALYSIS] AT SER-215; SER-350; SER-459; SER-462; THR-464; SER-469; SER-632 AND SER-636</scope>
    <scope>PHOSPHORYLATION [LARGE SCALE ANALYSIS] AT TYR-28 (ISOFORM 2)</scope>
    <scope>IDENTIFICATION BY MASS SPECTROMETRY [LARGE SCALE ANALYSIS]</scope>
    <source>
        <tissue>Brain</tissue>
        <tissue>Brown adipose tissue</tissue>
        <tissue>Heart</tissue>
        <tissue>Kidney</tissue>
        <tissue>Lung</tissue>
        <tissue>Spleen</tissue>
    </source>
</reference>
<protein>
    <recommendedName>
        <fullName>Rho GTPase-activating protein 27</fullName>
    </recommendedName>
    <alternativeName>
        <fullName>CIN85-associated multi-domain-containing Rho GTPase-activating protein 1</fullName>
    </alternativeName>
    <alternativeName>
        <fullName>Rho-type GTPase-activating protein 27</fullName>
    </alternativeName>
</protein>
<organism>
    <name type="scientific">Mus musculus</name>
    <name type="common">Mouse</name>
    <dbReference type="NCBI Taxonomy" id="10090"/>
    <lineage>
        <taxon>Eukaryota</taxon>
        <taxon>Metazoa</taxon>
        <taxon>Chordata</taxon>
        <taxon>Craniata</taxon>
        <taxon>Vertebrata</taxon>
        <taxon>Euteleostomi</taxon>
        <taxon>Mammalia</taxon>
        <taxon>Eutheria</taxon>
        <taxon>Euarchontoglires</taxon>
        <taxon>Glires</taxon>
        <taxon>Rodentia</taxon>
        <taxon>Myomorpha</taxon>
        <taxon>Muroidea</taxon>
        <taxon>Muridae</taxon>
        <taxon>Murinae</taxon>
        <taxon>Mus</taxon>
        <taxon>Mus</taxon>
    </lineage>
</organism>
<accession>A2AB59</accession>
<accession>Q3V366</accession>
<accession>Q4V9V5</accession>
<sequence length="869" mass="97049">MAADVEGDVYVLVEHPFEYTGKDGRRIAIQPNERYRLLRRSTEHWWHVRREPGGRPFYLPAQYVRELPALGDPAPAPQPSVPQQRPAVPEPLAYDYRFVSTPVGADGSSAEPRGRASSLCGPARQRTGGQRNSLAPGGPACLYVRPAAPVRPAQSLDDLARGGTAPPAGLLGSAGHFKASSVAGSWVCPRPLAPSDSENVYEAIPDLRCPPRAESPKQVDDPPEPVYANVERQPRATSPRSAAAPPRLSPVWETHTDTGTGRPYYYNPDTGVTTWESPFETPEGTTSPATSRASVGSGESLETEWGQYWDEESRRVFFYNPLTGETAWEDETEELEEDHQEQLEMQPSLSPRSPGQQRPPTPETDYPELLASYPEEDYSPVGSFSDPGPASPLVAPPGWSCQITPDKQMLYTNQFTQEQWVRLEDQHGKPYFYNPEDSSVQWELPQVPIPAPRSVRKSSQDSDTPAQASPPEEKIKTLDKAGVLHRTKTVDKGKRLRKKHWSTSWTVLEGGVLTFFKDSKTSAAGGLRQPSKLSTPEYTVELKGASLSWAPKDKSSKKNVLELRSRDGSEYLIQHDSEAIISTWHKAIAEGISELSADLLQGEEGEPSSADFGSSERLGSWREEDVRQNAASPSLSPGGLESDLSRVRHKLRKFLQRRPTLQSLRDKGYIKDQVFGCALAQLCERERSPVPRFVQQCIRTVEARGLDIDGLYRISGNLATIQKLRYKVDHDERLDLDDGRWEDVHVITGALKLFFRELPEPLFPFSHFHQFIAAIKLQDPAQRSRCVRDLVRTLPAPNQDTLRLLIQHLCRVIEHGEQNRMTVQNVAIVFGPTLLRPEMEEASMPMTMVFQNQVVELILHQCADIFPPH</sequence>
<keyword id="KW-0025">Alternative splicing</keyword>
<keyword id="KW-0963">Cytoplasm</keyword>
<keyword id="KW-0254">Endocytosis</keyword>
<keyword id="KW-0343">GTPase activation</keyword>
<keyword id="KW-0472">Membrane</keyword>
<keyword id="KW-0597">Phosphoprotein</keyword>
<keyword id="KW-1185">Reference proteome</keyword>
<keyword id="KW-0677">Repeat</keyword>
<keyword id="KW-0728">SH3 domain</keyword>